<comment type="function">
    <text evidence="1">Involved in transmission of the virus by the vector nematode Paratrichodorus pachydermus.</text>
</comment>
<comment type="subunit">
    <text evidence="1">Interacts with capsid protein; this interaction may play a role in vector transmission of the virus.</text>
</comment>
<dbReference type="EMBL" id="Z36974">
    <property type="protein sequence ID" value="CAA85422.2"/>
    <property type="molecule type" value="Genomic_RNA"/>
</dbReference>
<dbReference type="RefSeq" id="NP_620683.1">
    <property type="nucleotide sequence ID" value="NC_003811.1"/>
</dbReference>
<dbReference type="SMR" id="Q88898"/>
<dbReference type="GeneID" id="962134"/>
<dbReference type="KEGG" id="vg:962134"/>
<dbReference type="Proteomes" id="UP000001669">
    <property type="component" value="Genome"/>
</dbReference>
<name>P40_TRVPP</name>
<organismHost>
    <name type="scientific">Bidens pilosa</name>
    <name type="common">Hairy beggarticks</name>
    <name type="synonym">Cobbler's pegs</name>
    <dbReference type="NCBI Taxonomy" id="42337"/>
</organismHost>
<organismHost>
    <name type="scientific">Capsicum annuum</name>
    <name type="common">Capsicum pepper</name>
    <dbReference type="NCBI Taxonomy" id="4072"/>
</organismHost>
<organismHost>
    <name type="scientific">Cynara cardunculus var. scolymus</name>
    <name type="common">Globe artichoke</name>
    <name type="synonym">Cynara scolymus</name>
    <dbReference type="NCBI Taxonomy" id="59895"/>
</organismHost>
<organismHost>
    <name type="scientific">Solanum lycopersicum</name>
    <name type="common">Tomato</name>
    <name type="synonym">Lycopersicon esculentum</name>
    <dbReference type="NCBI Taxonomy" id="4081"/>
</organismHost>
<proteinExistence type="evidence at protein level"/>
<keyword id="KW-1185">Reference proteome</keyword>
<sequence>MHELLRKWLDDTNVLLLDNGLVVKVRSRVPHIRTYEVIGKLSVFDNSLGDDTLFEGKVENVFVFMFRRFLCVNKDGHCYSRKHDELYYYGRVDLDSVSKVTSGYEKLFIHRELYILTDLIERVSKFFNLAQDVVEASFEYAKVEERLGHVRNVLQLAGGKSTNADLTIKISDDVEQLLGKRGGFLKVVNGILSKNGSDVVTNDNELIHAINQNLVPDKVMSVSNVMKETGFLQFPKFLSKLEGQVPKGTKFLDKHVPDFTWIQALEERVNIRRGESGLQTLLADIVPRNAIAAQKLTMLGYIEYHDYVVIVCQSGVFSDDWATCRMLWAALSSAQLYTYVDASRIGPIVYGWLL</sequence>
<reference key="1">
    <citation type="journal article" date="1995" name="J. Gen. Virol.">
        <title>Sequence of RNA 2 of a nematode-transmissible isolate of tobacco rattle virus.</title>
        <authorList>
            <person name="Hernandez C."/>
            <person name="Mathis A."/>
            <person name="Brown D.J."/>
            <person name="Bol J.F."/>
        </authorList>
    </citation>
    <scope>NUCLEOTIDE SEQUENCE [GENOMIC RNA]</scope>
</reference>
<reference key="2">
    <citation type="submission" date="1999-05" db="EMBL/GenBank/DDBJ databases">
        <authorList>
            <person name="Hernandez C."/>
        </authorList>
    </citation>
    <scope>SEQUENCE REVISION</scope>
</reference>
<reference key="3">
    <citation type="journal article" date="1999" name="J. Gen. Virol.">
        <title>Nonstructural proteins of Tobacco rattle virus which have a role in nematode-transmission: expression pattern and interaction with viral coat protein.</title>
        <authorList>
            <person name="Visser P.B."/>
            <person name="Bol J.F."/>
        </authorList>
    </citation>
    <scope>FUNCTION</scope>
    <scope>INTERACTION WITH CAPSID PROTEIN</scope>
</reference>
<accession>Q88898</accession>
<protein>
    <recommendedName>
        <fullName>40 kDa protein</fullName>
    </recommendedName>
</protein>
<organism>
    <name type="scientific">Tobacco rattle virus (isolate PpK20)</name>
    <name type="common">TRV</name>
    <dbReference type="NCBI Taxonomy" id="652939"/>
    <lineage>
        <taxon>Viruses</taxon>
        <taxon>Riboviria</taxon>
        <taxon>Orthornavirae</taxon>
        <taxon>Kitrinoviricota</taxon>
        <taxon>Alsuviricetes</taxon>
        <taxon>Martellivirales</taxon>
        <taxon>Virgaviridae</taxon>
        <taxon>Tobravirus</taxon>
        <taxon>Tobacco rattle virus</taxon>
    </lineage>
</organism>
<feature type="chain" id="PRO_0000409291" description="40 kDa protein">
    <location>
        <begin position="1"/>
        <end position="354"/>
    </location>
</feature>
<evidence type="ECO:0000269" key="1">
    <source>
    </source>
</evidence>